<dbReference type="EC" id="2.6.1.45" evidence="4 5"/>
<dbReference type="EC" id="2.6.1.44" evidence="4 5"/>
<dbReference type="EC" id="2.6.1.-"/>
<dbReference type="EC" id="2.6.1.51" evidence="5"/>
<dbReference type="EMBL" id="AF063901">
    <property type="protein sequence ID" value="AAC26854.1"/>
    <property type="molecule type" value="mRNA"/>
</dbReference>
<dbReference type="EMBL" id="AB048945">
    <property type="protein sequence ID" value="BAB20811.1"/>
    <property type="molecule type" value="mRNA"/>
</dbReference>
<dbReference type="EMBL" id="AC007209">
    <property type="protein sequence ID" value="AAD28669.1"/>
    <property type="molecule type" value="Genomic_DNA"/>
</dbReference>
<dbReference type="EMBL" id="CP002685">
    <property type="protein sequence ID" value="AEC06227.1"/>
    <property type="molecule type" value="Genomic_DNA"/>
</dbReference>
<dbReference type="EMBL" id="CP002685">
    <property type="protein sequence ID" value="AEC06228.1"/>
    <property type="molecule type" value="Genomic_DNA"/>
</dbReference>
<dbReference type="EMBL" id="CP002685">
    <property type="protein sequence ID" value="ANM62628.1"/>
    <property type="molecule type" value="Genomic_DNA"/>
</dbReference>
<dbReference type="EMBL" id="AY096498">
    <property type="protein sequence ID" value="AAM20136.1"/>
    <property type="molecule type" value="mRNA"/>
</dbReference>
<dbReference type="EMBL" id="AY114010">
    <property type="protein sequence ID" value="AAM45058.1"/>
    <property type="molecule type" value="mRNA"/>
</dbReference>
<dbReference type="EMBL" id="AK221418">
    <property type="protein sequence ID" value="BAD94403.1"/>
    <property type="molecule type" value="mRNA"/>
</dbReference>
<dbReference type="PIR" id="T52250">
    <property type="entry name" value="T52250"/>
</dbReference>
<dbReference type="RefSeq" id="NP_001318216.1">
    <property type="nucleotide sequence ID" value="NM_001335388.1"/>
</dbReference>
<dbReference type="RefSeq" id="NP_178969.1">
    <property type="nucleotide sequence ID" value="NM_126925.5"/>
</dbReference>
<dbReference type="RefSeq" id="NP_849951.1">
    <property type="nucleotide sequence ID" value="NM_179620.2"/>
</dbReference>
<dbReference type="PDB" id="6PK1">
    <property type="method" value="X-ray"/>
    <property type="resolution" value="2.10 A"/>
    <property type="chains" value="A/B=1-401"/>
</dbReference>
<dbReference type="PDB" id="6PK3">
    <property type="method" value="X-ray"/>
    <property type="resolution" value="2.18 A"/>
    <property type="chains" value="A/B=1-401"/>
</dbReference>
<dbReference type="PDBsum" id="6PK1"/>
<dbReference type="PDBsum" id="6PK3"/>
<dbReference type="SMR" id="Q56YA5"/>
<dbReference type="BioGRID" id="1183">
    <property type="interactions" value="4"/>
</dbReference>
<dbReference type="FunCoup" id="Q56YA5">
    <property type="interactions" value="1964"/>
</dbReference>
<dbReference type="IntAct" id="Q56YA5">
    <property type="interactions" value="4"/>
</dbReference>
<dbReference type="MINT" id="Q56YA5"/>
<dbReference type="STRING" id="3702.Q56YA5"/>
<dbReference type="iPTMnet" id="Q56YA5"/>
<dbReference type="PaxDb" id="3702-AT2G13360.1"/>
<dbReference type="ProteomicsDB" id="234543"/>
<dbReference type="EnsemblPlants" id="AT2G13360.1">
    <property type="protein sequence ID" value="AT2G13360.1"/>
    <property type="gene ID" value="AT2G13360"/>
</dbReference>
<dbReference type="EnsemblPlants" id="AT2G13360.2">
    <property type="protein sequence ID" value="AT2G13360.2"/>
    <property type="gene ID" value="AT2G13360"/>
</dbReference>
<dbReference type="EnsemblPlants" id="AT2G13360.3">
    <property type="protein sequence ID" value="AT2G13360.3"/>
    <property type="gene ID" value="AT2G13360"/>
</dbReference>
<dbReference type="GeneID" id="815822"/>
<dbReference type="Gramene" id="AT2G13360.1">
    <property type="protein sequence ID" value="AT2G13360.1"/>
    <property type="gene ID" value="AT2G13360"/>
</dbReference>
<dbReference type="Gramene" id="AT2G13360.2">
    <property type="protein sequence ID" value="AT2G13360.2"/>
    <property type="gene ID" value="AT2G13360"/>
</dbReference>
<dbReference type="Gramene" id="AT2G13360.3">
    <property type="protein sequence ID" value="AT2G13360.3"/>
    <property type="gene ID" value="AT2G13360"/>
</dbReference>
<dbReference type="KEGG" id="ath:AT2G13360"/>
<dbReference type="Araport" id="AT2G13360"/>
<dbReference type="TAIR" id="AT2G13360">
    <property type="gene designation" value="AGT"/>
</dbReference>
<dbReference type="eggNOG" id="KOG2862">
    <property type="taxonomic scope" value="Eukaryota"/>
</dbReference>
<dbReference type="HOGENOM" id="CLU_027686_1_0_1"/>
<dbReference type="InParanoid" id="Q56YA5"/>
<dbReference type="OMA" id="YEWDTPA"/>
<dbReference type="OrthoDB" id="7403325at2759"/>
<dbReference type="PhylomeDB" id="Q56YA5"/>
<dbReference type="BioCyc" id="ARA:AT2G13360-MONOMER"/>
<dbReference type="BioCyc" id="MetaCyc:AT2G13360-MONOMER"/>
<dbReference type="BRENDA" id="2.6.1.14">
    <property type="organism ID" value="399"/>
</dbReference>
<dbReference type="BRENDA" id="2.6.1.44">
    <property type="organism ID" value="399"/>
</dbReference>
<dbReference type="BRENDA" id="2.6.1.45">
    <property type="organism ID" value="399"/>
</dbReference>
<dbReference type="SABIO-RK" id="Q56YA5"/>
<dbReference type="CD-CODE" id="4299E36E">
    <property type="entry name" value="Nucleolus"/>
</dbReference>
<dbReference type="PRO" id="PR:Q56YA5"/>
<dbReference type="Proteomes" id="UP000006548">
    <property type="component" value="Chromosome 2"/>
</dbReference>
<dbReference type="ExpressionAtlas" id="Q56YA5">
    <property type="expression patterns" value="baseline and differential"/>
</dbReference>
<dbReference type="GO" id="GO:0048046">
    <property type="term" value="C:apoplast"/>
    <property type="evidence" value="ECO:0007005"/>
    <property type="project" value="TAIR"/>
</dbReference>
<dbReference type="GO" id="GO:0009507">
    <property type="term" value="C:chloroplast"/>
    <property type="evidence" value="ECO:0007005"/>
    <property type="project" value="TAIR"/>
</dbReference>
<dbReference type="GO" id="GO:0009570">
    <property type="term" value="C:chloroplast stroma"/>
    <property type="evidence" value="ECO:0007005"/>
    <property type="project" value="TAIR"/>
</dbReference>
<dbReference type="GO" id="GO:0005829">
    <property type="term" value="C:cytosol"/>
    <property type="evidence" value="ECO:0007005"/>
    <property type="project" value="TAIR"/>
</dbReference>
<dbReference type="GO" id="GO:0005739">
    <property type="term" value="C:mitochondrion"/>
    <property type="evidence" value="ECO:0007005"/>
    <property type="project" value="TAIR"/>
</dbReference>
<dbReference type="GO" id="GO:0005777">
    <property type="term" value="C:peroxisome"/>
    <property type="evidence" value="ECO:0000314"/>
    <property type="project" value="TAIR"/>
</dbReference>
<dbReference type="GO" id="GO:0005886">
    <property type="term" value="C:plasma membrane"/>
    <property type="evidence" value="ECO:0007005"/>
    <property type="project" value="TAIR"/>
</dbReference>
<dbReference type="GO" id="GO:0008453">
    <property type="term" value="F:alanine-glyoxylate transaminase activity"/>
    <property type="evidence" value="ECO:0000314"/>
    <property type="project" value="TAIR"/>
</dbReference>
<dbReference type="GO" id="GO:0050281">
    <property type="term" value="F:L-serine-glyoxylate transaminase activity"/>
    <property type="evidence" value="ECO:0000314"/>
    <property type="project" value="TAIR"/>
</dbReference>
<dbReference type="GO" id="GO:0004760">
    <property type="term" value="F:L-serine-pyruvate transaminase activity"/>
    <property type="evidence" value="ECO:0000314"/>
    <property type="project" value="TAIR"/>
</dbReference>
<dbReference type="GO" id="GO:0003729">
    <property type="term" value="F:mRNA binding"/>
    <property type="evidence" value="ECO:0000314"/>
    <property type="project" value="TAIR"/>
</dbReference>
<dbReference type="GO" id="GO:0009853">
    <property type="term" value="P:photorespiration"/>
    <property type="evidence" value="ECO:0000303"/>
    <property type="project" value="TAIR"/>
</dbReference>
<dbReference type="CDD" id="cd06451">
    <property type="entry name" value="AGAT_like"/>
    <property type="match status" value="1"/>
</dbReference>
<dbReference type="FunFam" id="3.40.640.10:FF:000054">
    <property type="entry name" value="Serine--glyoxylate aminotransferase"/>
    <property type="match status" value="1"/>
</dbReference>
<dbReference type="FunFam" id="3.90.1150.10:FF:000031">
    <property type="entry name" value="Serine--glyoxylate aminotransferase"/>
    <property type="match status" value="1"/>
</dbReference>
<dbReference type="Gene3D" id="3.90.1150.10">
    <property type="entry name" value="Aspartate Aminotransferase, domain 1"/>
    <property type="match status" value="1"/>
</dbReference>
<dbReference type="Gene3D" id="3.40.640.10">
    <property type="entry name" value="Type I PLP-dependent aspartate aminotransferase-like (Major domain)"/>
    <property type="match status" value="1"/>
</dbReference>
<dbReference type="InterPro" id="IPR000192">
    <property type="entry name" value="Aminotrans_V_dom"/>
</dbReference>
<dbReference type="InterPro" id="IPR020578">
    <property type="entry name" value="Aminotrans_V_PyrdxlP_BS"/>
</dbReference>
<dbReference type="InterPro" id="IPR015424">
    <property type="entry name" value="PyrdxlP-dep_Trfase"/>
</dbReference>
<dbReference type="InterPro" id="IPR015421">
    <property type="entry name" value="PyrdxlP-dep_Trfase_major"/>
</dbReference>
<dbReference type="InterPro" id="IPR015422">
    <property type="entry name" value="PyrdxlP-dep_Trfase_small"/>
</dbReference>
<dbReference type="InterPro" id="IPR024169">
    <property type="entry name" value="SP_NH2Trfase/AEP_transaminase"/>
</dbReference>
<dbReference type="PANTHER" id="PTHR21152:SF24">
    <property type="entry name" value="ALANINE--GLYOXYLATE AMINOTRANSFERASE 1"/>
    <property type="match status" value="1"/>
</dbReference>
<dbReference type="PANTHER" id="PTHR21152">
    <property type="entry name" value="AMINOTRANSFERASE CLASS V"/>
    <property type="match status" value="1"/>
</dbReference>
<dbReference type="Pfam" id="PF00266">
    <property type="entry name" value="Aminotran_5"/>
    <property type="match status" value="1"/>
</dbReference>
<dbReference type="PIRSF" id="PIRSF000524">
    <property type="entry name" value="SPT"/>
    <property type="match status" value="1"/>
</dbReference>
<dbReference type="SUPFAM" id="SSF53383">
    <property type="entry name" value="PLP-dependent transferases"/>
    <property type="match status" value="1"/>
</dbReference>
<dbReference type="PROSITE" id="PS00595">
    <property type="entry name" value="AA_TRANSFER_CLASS_5"/>
    <property type="match status" value="1"/>
</dbReference>
<accession>Q56YA5</accession>
<accession>O81248</accession>
<sequence>MDYMYGPGRHHLFVPGPVNIPEPVIRAMNRNNEDYRSPAIPALTKTLLEDVKKIFKTTSGTPFLFPTTGTGAWESALTNTLSPGDRIVSFLIGQFSLLWIDQQKRLNFNVDVVESDWGQGANLQVLASKLSQDENHTIKAICIVHNETATGVTNDISAVRTLLDHYKHPALLLVDGVSSICALDFRMDEWGVDVALTGSQKALSLPTGLGIVCASPKALEATKTSKSLKVFFDWNDYLKFYKLGTYWPYTPSIQLLYGLRAALDLIFEEGLENIIARHARLGKATRLAVEAWGLKNCTQKEEWISNTVTAVMVPPHIDGSEIVRRAWQRYNLSLGLGLNKVAGKVFRIGHLGNVNELQLLGCLAGVEMILKDVGYPVVMGSGVAAASTYLQHHIPLIPSRI</sequence>
<keyword id="KW-0002">3D-structure</keyword>
<keyword id="KW-0007">Acetylation</keyword>
<keyword id="KW-0032">Aminotransferase</keyword>
<keyword id="KW-0576">Peroxisome</keyword>
<keyword id="KW-0597">Phosphoprotein</keyword>
<keyword id="KW-0601">Photorespiration</keyword>
<keyword id="KW-0663">Pyridoxal phosphate</keyword>
<keyword id="KW-1185">Reference proteome</keyword>
<keyword id="KW-0808">Transferase</keyword>
<proteinExistence type="evidence at protein level"/>
<feature type="chain" id="PRO_0000150234" description="Serine--glyoxylate aminotransferase">
    <location>
        <begin position="1"/>
        <end position="401"/>
    </location>
</feature>
<feature type="short sequence motif" description="Microbody targeting signal" evidence="2">
    <location>
        <begin position="399"/>
        <end position="401"/>
    </location>
</feature>
<feature type="binding site" evidence="8 15 16">
    <location>
        <begin position="68"/>
        <end position="70"/>
    </location>
    <ligand>
        <name>pyridoxal 5'-phosphate</name>
        <dbReference type="ChEBI" id="CHEBI:597326"/>
    </ligand>
</feature>
<feature type="binding site" evidence="8 15 16">
    <location>
        <position position="148"/>
    </location>
    <ligand>
        <name>pyridoxal 5'-phosphate</name>
        <dbReference type="ChEBI" id="CHEBI:597326"/>
    </ligand>
</feature>
<feature type="binding site" evidence="8 15 16">
    <location>
        <begin position="200"/>
        <end position="201"/>
    </location>
    <ligand>
        <name>pyridoxal 5'-phosphate</name>
        <dbReference type="ChEBI" id="CHEBI:597326"/>
    </ligand>
</feature>
<feature type="binding site" evidence="8 15">
    <location>
        <position position="201"/>
    </location>
    <ligand>
        <name>3-hydroxypyruvate</name>
        <dbReference type="ChEBI" id="CHEBI:17180"/>
    </ligand>
</feature>
<feature type="binding site" evidence="8 15">
    <location>
        <position position="347"/>
    </location>
    <ligand>
        <name>3-hydroxypyruvate</name>
        <dbReference type="ChEBI" id="CHEBI:17180"/>
    </ligand>
</feature>
<feature type="modified residue" description="N-acetylmethionine" evidence="18">
    <location>
        <position position="1"/>
    </location>
</feature>
<feature type="modified residue" description="N6-(pyridoxal phosphate)lysine" evidence="1">
    <location>
        <position position="201"/>
    </location>
</feature>
<feature type="modified residue" description="Phosphoserine" evidence="17">
    <location>
        <position position="204"/>
    </location>
</feature>
<feature type="mutagenesis site" description="Abolishes aminotransferase activity." evidence="3">
    <original>P</original>
    <variation>L</variation>
    <location>
        <position position="251"/>
    </location>
</feature>
<feature type="strand" evidence="19">
    <location>
        <begin position="11"/>
        <end position="17"/>
    </location>
</feature>
<feature type="helix" evidence="19">
    <location>
        <begin position="22"/>
        <end position="27"/>
    </location>
</feature>
<feature type="helix" evidence="19">
    <location>
        <begin position="39"/>
        <end position="55"/>
    </location>
</feature>
<feature type="strand" evidence="19">
    <location>
        <begin position="61"/>
        <end position="67"/>
    </location>
</feature>
<feature type="helix" evidence="19">
    <location>
        <begin position="69"/>
        <end position="80"/>
    </location>
</feature>
<feature type="strand" evidence="19">
    <location>
        <begin position="86"/>
        <end position="91"/>
    </location>
</feature>
<feature type="helix" evidence="19">
    <location>
        <begin position="94"/>
        <end position="105"/>
    </location>
</feature>
<feature type="strand" evidence="19">
    <location>
        <begin position="109"/>
        <end position="114"/>
    </location>
</feature>
<feature type="helix" evidence="19">
    <location>
        <begin position="123"/>
        <end position="132"/>
    </location>
</feature>
<feature type="strand" evidence="19">
    <location>
        <begin position="138"/>
        <end position="146"/>
    </location>
</feature>
<feature type="turn" evidence="19">
    <location>
        <begin position="148"/>
        <end position="150"/>
    </location>
</feature>
<feature type="helix" evidence="19">
    <location>
        <begin position="156"/>
        <end position="165"/>
    </location>
</feature>
<feature type="strand" evidence="19">
    <location>
        <begin position="171"/>
        <end position="175"/>
    </location>
</feature>
<feature type="turn" evidence="19">
    <location>
        <begin position="177"/>
        <end position="179"/>
    </location>
</feature>
<feature type="helix" evidence="19">
    <location>
        <begin position="187"/>
        <end position="190"/>
    </location>
</feature>
<feature type="strand" evidence="19">
    <location>
        <begin position="193"/>
        <end position="198"/>
    </location>
</feature>
<feature type="turn" evidence="20">
    <location>
        <begin position="199"/>
        <end position="203"/>
    </location>
</feature>
<feature type="strand" evidence="19">
    <location>
        <begin position="210"/>
        <end position="214"/>
    </location>
</feature>
<feature type="helix" evidence="19">
    <location>
        <begin position="216"/>
        <end position="222"/>
    </location>
</feature>
<feature type="helix" evidence="19">
    <location>
        <begin position="234"/>
        <end position="242"/>
    </location>
</feature>
<feature type="helix" evidence="19">
    <location>
        <begin position="253"/>
        <end position="269"/>
    </location>
</feature>
<feature type="helix" evidence="19">
    <location>
        <begin position="271"/>
        <end position="292"/>
    </location>
</feature>
<feature type="strand" evidence="19">
    <location>
        <begin position="295"/>
        <end position="297"/>
    </location>
</feature>
<feature type="helix" evidence="19">
    <location>
        <begin position="301"/>
        <end position="303"/>
    </location>
</feature>
<feature type="strand" evidence="19">
    <location>
        <begin position="306"/>
        <end position="312"/>
    </location>
</feature>
<feature type="helix" evidence="19">
    <location>
        <begin position="319"/>
        <end position="330"/>
    </location>
</feature>
<feature type="strand" evidence="19">
    <location>
        <begin position="332"/>
        <end position="336"/>
    </location>
</feature>
<feature type="helix" evidence="19">
    <location>
        <begin position="339"/>
        <end position="341"/>
    </location>
</feature>
<feature type="turn" evidence="19">
    <location>
        <begin position="342"/>
        <end position="344"/>
    </location>
</feature>
<feature type="strand" evidence="19">
    <location>
        <begin position="345"/>
        <end position="349"/>
    </location>
</feature>
<feature type="helix" evidence="19">
    <location>
        <begin position="356"/>
        <end position="372"/>
    </location>
</feature>
<feature type="helix" evidence="19">
    <location>
        <begin position="381"/>
        <end position="393"/>
    </location>
</feature>
<feature type="helix" evidence="19">
    <location>
        <begin position="398"/>
        <end position="400"/>
    </location>
</feature>
<evidence type="ECO:0000250" key="1"/>
<evidence type="ECO:0000255" key="2"/>
<evidence type="ECO:0000269" key="3">
    <source>
    </source>
</evidence>
<evidence type="ECO:0000269" key="4">
    <source>
    </source>
</evidence>
<evidence type="ECO:0000269" key="5">
    <source>
    </source>
</evidence>
<evidence type="ECO:0000269" key="6">
    <source>
    </source>
</evidence>
<evidence type="ECO:0000269" key="7">
    <source>
    </source>
</evidence>
<evidence type="ECO:0000269" key="8">
    <source>
    </source>
</evidence>
<evidence type="ECO:0000303" key="9">
    <source>
    </source>
</evidence>
<evidence type="ECO:0000305" key="10"/>
<evidence type="ECO:0000305" key="11">
    <source>
    </source>
</evidence>
<evidence type="ECO:0000305" key="12">
    <source>
    </source>
</evidence>
<evidence type="ECO:0000312" key="13">
    <source>
        <dbReference type="Araport" id="AT2G13360"/>
    </source>
</evidence>
<evidence type="ECO:0000312" key="14">
    <source>
        <dbReference type="EMBL" id="AAD28669.1"/>
    </source>
</evidence>
<evidence type="ECO:0007744" key="15">
    <source>
        <dbReference type="PDB" id="6PK1"/>
    </source>
</evidence>
<evidence type="ECO:0007744" key="16">
    <source>
        <dbReference type="PDB" id="6PK3"/>
    </source>
</evidence>
<evidence type="ECO:0007744" key="17">
    <source>
    </source>
</evidence>
<evidence type="ECO:0007744" key="18">
    <source>
    </source>
</evidence>
<evidence type="ECO:0007829" key="19">
    <source>
        <dbReference type="PDB" id="6PK1"/>
    </source>
</evidence>
<evidence type="ECO:0007829" key="20">
    <source>
        <dbReference type="PDB" id="6PK3"/>
    </source>
</evidence>
<comment type="function">
    <text evidence="4 5 7">Photorespiratory enzyme that catalyzes transamination reactions with multiple substrates, including asparagine. Functions exclusively as a catabolic enzyme in Asn metabolism (PubMed:18235971, PubMed:23098902). Involved in root development during seedling establishment after seed germination by regulating serine homeostasis and acetate conversion (PubMed:31161264).</text>
</comment>
<comment type="catalytic activity">
    <reaction evidence="4 5">
        <text>glyoxylate + L-serine = 3-hydroxypyruvate + glycine</text>
        <dbReference type="Rhea" id="RHEA:19125"/>
        <dbReference type="ChEBI" id="CHEBI:17180"/>
        <dbReference type="ChEBI" id="CHEBI:33384"/>
        <dbReference type="ChEBI" id="CHEBI:36655"/>
        <dbReference type="ChEBI" id="CHEBI:57305"/>
        <dbReference type="EC" id="2.6.1.45"/>
    </reaction>
    <physiologicalReaction direction="left-to-right" evidence="5">
        <dbReference type="Rhea" id="RHEA:19126"/>
    </physiologicalReaction>
    <physiologicalReaction direction="right-to-left" evidence="5">
        <dbReference type="Rhea" id="RHEA:19127"/>
    </physiologicalReaction>
</comment>
<comment type="catalytic activity">
    <reaction evidence="4 5">
        <text>glyoxylate + L-alanine = glycine + pyruvate</text>
        <dbReference type="Rhea" id="RHEA:24248"/>
        <dbReference type="ChEBI" id="CHEBI:15361"/>
        <dbReference type="ChEBI" id="CHEBI:36655"/>
        <dbReference type="ChEBI" id="CHEBI:57305"/>
        <dbReference type="ChEBI" id="CHEBI:57972"/>
        <dbReference type="EC" id="2.6.1.44"/>
    </reaction>
    <physiologicalReaction direction="left-to-right" evidence="5">
        <dbReference type="Rhea" id="RHEA:24249"/>
    </physiologicalReaction>
    <physiologicalReaction direction="right-to-left" evidence="5">
        <dbReference type="Rhea" id="RHEA:24250"/>
    </physiologicalReaction>
</comment>
<comment type="catalytic activity">
    <reaction evidence="5">
        <text>L-serine + pyruvate = 3-hydroxypyruvate + L-alanine</text>
        <dbReference type="Rhea" id="RHEA:22852"/>
        <dbReference type="ChEBI" id="CHEBI:15361"/>
        <dbReference type="ChEBI" id="CHEBI:17180"/>
        <dbReference type="ChEBI" id="CHEBI:33384"/>
        <dbReference type="ChEBI" id="CHEBI:57972"/>
        <dbReference type="EC" id="2.6.1.51"/>
    </reaction>
    <physiologicalReaction direction="left-to-right" evidence="5">
        <dbReference type="Rhea" id="RHEA:22853"/>
    </physiologicalReaction>
    <physiologicalReaction direction="right-to-left" evidence="5">
        <dbReference type="Rhea" id="RHEA:22854"/>
    </physiologicalReaction>
</comment>
<comment type="catalytic activity">
    <reaction evidence="5">
        <text>3-hydroxypyruvate + L-asparagine = 2-oxosuccinamate + L-serine</text>
        <dbReference type="Rhea" id="RHEA:68380"/>
        <dbReference type="ChEBI" id="CHEBI:17180"/>
        <dbReference type="ChEBI" id="CHEBI:33384"/>
        <dbReference type="ChEBI" id="CHEBI:57735"/>
        <dbReference type="ChEBI" id="CHEBI:58048"/>
    </reaction>
    <physiologicalReaction direction="left-to-right" evidence="5">
        <dbReference type="Rhea" id="RHEA:68381"/>
    </physiologicalReaction>
</comment>
<comment type="catalytic activity">
    <reaction evidence="5">
        <text>L-asparagine + glyoxylate = 2-oxosuccinamate + glycine</text>
        <dbReference type="Rhea" id="RHEA:68376"/>
        <dbReference type="ChEBI" id="CHEBI:36655"/>
        <dbReference type="ChEBI" id="CHEBI:57305"/>
        <dbReference type="ChEBI" id="CHEBI:57735"/>
        <dbReference type="ChEBI" id="CHEBI:58048"/>
    </reaction>
    <physiologicalReaction direction="left-to-right" evidence="5">
        <dbReference type="Rhea" id="RHEA:68377"/>
    </physiologicalReaction>
</comment>
<comment type="catalytic activity">
    <reaction evidence="5">
        <text>L-asparagine + pyruvate = 2-oxosuccinamate + L-alanine</text>
        <dbReference type="Rhea" id="RHEA:68372"/>
        <dbReference type="ChEBI" id="CHEBI:15361"/>
        <dbReference type="ChEBI" id="CHEBI:57735"/>
        <dbReference type="ChEBI" id="CHEBI:57972"/>
        <dbReference type="ChEBI" id="CHEBI:58048"/>
    </reaction>
    <physiologicalReaction direction="left-to-right" evidence="5">
        <dbReference type="Rhea" id="RHEA:68373"/>
    </physiologicalReaction>
</comment>
<comment type="cofactor">
    <cofactor evidence="8">
        <name>pyridoxal 5'-phosphate</name>
        <dbReference type="ChEBI" id="CHEBI:597326"/>
    </cofactor>
</comment>
<comment type="activity regulation">
    <text evidence="4">Inhibited by aminooxyacetate and beta-chloro-L-alanine, but not by p-hydroxymercuribenzoate.</text>
</comment>
<comment type="biophysicochemical properties">
    <kinetics>
        <KM evidence="4 5">0.87 mM for alanine (with recombinant enzyme, in the presence of 20 mM glyoxylate)</KM>
        <KM evidence="4 5">1.08 mM for alanine (with recombinant enzyme, in the presence of 20 mM hydroxypyruvate)</KM>
        <KM evidence="4 5">2.47 mM for serine (with recombinant enzyme, in the presence of 20 mM glyoxylate)</KM>
        <KM evidence="4 5">0.99 mM for serine (with recombinant enzyme, in the presence of 20 mM pyruvate)</KM>
        <KM evidence="4 5">0.59 mM for glycine (with recombinant enzyme, in the presence of 20 mM pyruvate)</KM>
        <KM evidence="4 5">1.58 mM for glycine (with recombinant enzyme, in the presence of 1 mM hydroxypyruvate)</KM>
        <KM evidence="4 5">2.82 mM for asparagine (with recombinant enzyme, in the presence of 20 mM glyoxylate)</KM>
        <KM evidence="4 5">3.79 mM for asparagine (with recombinant enzyme, in the presence of 20 mM hydroxypyruvate)</KM>
        <KM evidence="4 5">5 mM for L-serine (with native enzyme, in the presence of 10 mM glyoxylate)</KM>
        <KM evidence="4 5">1.53 mM for L-serine (with native enzyme, in the presence of 0.5 mM glyoxylate)</KM>
        <KM evidence="4 5">0.91 mM for glyoxylate (with native enzyme, in the presence of 30 mM L-serine)</KM>
        <KM evidence="4 5">2.83 mM for glycine (with native enzyme, in the presence of 0.5 mM hydroxypyruvate)</KM>
        <KM evidence="4 5">0.57 mM for hydroxypyruvate (with native enzyme, in the presence of 15.4 mM glycine)</KM>
        <KM evidence="4 5">1.25 mM for L-alanine (with native enzyme, in the presence of 10 mM glyoxylate)</KM>
        <KM evidence="4 5">0.58 mM for L-alanine (with native enzyme, in the presence of 0.5 mM glyoxylate)</KM>
        <KM evidence="4 5">0.5 mM for glyoxylate (with native enzyme, in the presence of 30 mM L-alanine)</KM>
        <KM evidence="4 5">1.25 mM for glycine (with native enzyme, in the presence of 0.5 mM pyruvate)</KM>
        <KM evidence="4 5">0.22 mM for pyruvate (with native enzyme, in the presence of 15.4 mM glycine)</KM>
        <Vmax evidence="4 5">50.2 nmol/sec/mg enzyme with alanine as substrate (with recombinant enzyme, in the presence of 20 mM glyoxylate)</Vmax>
        <Vmax evidence="4 5">73.8 nmol/sec/mg enzyme with alanine as substrate (with recombinant enzyme, in the presence of 20 mM hydroxypyruvate)</Vmax>
        <Vmax evidence="4 5">33.2 nmol/sec/mg enzyme with serine as substrate (with recombinant enzyme, in the presence of 20 mM glyoxylate)</Vmax>
        <Vmax evidence="4 5">37.0 nmol/sec/mg enzyme with serine as substrate (with recombinant enzyme, in the presence of 20 mM pyruvate)</Vmax>
        <Vmax evidence="4 5">8.4 nmol/sec/mg enzyme with glycine as substrate (with recombinant enzyme, in the presence of 20 mM pyruvate)</Vmax>
        <Vmax evidence="4 5">3.8 nmol/sec/mg enzyme with glycine as substrate (with recombinant enzyme, in the presence of 1 mM hydroxypyruvate)</Vmax>
        <Vmax evidence="4 5">292.0 nmol/sec/mg enzyme with asparagine as substrate (with recombinant enzyme, in the presence of 20 mM glyoxylate)</Vmax>
        <Vmax evidence="4 5">704.0 nmol/sec/mg enzyme with asparagine as substrate (with recombinant enzyme, in the presence of 20 mM pyruvate)</Vmax>
        <Vmax evidence="4 5">358.0 nmol/sec/mg enzyme with asparagine as substrate (with recombinant enzyme, in the presence of 20 mM hydroxypyruvate)</Vmax>
        <Vmax evidence="4 5">7.64 umol/min/mg enzyme with L-serine as substrate (with native enzyme, in the presence of 10 mM glyoxylate)</Vmax>
        <Vmax evidence="4 5">3.42 umol/min/mg enzyme with L-alanine as substrate (with native enzyme, in the presence of 10 mM glyoxylate)</Vmax>
        <text>kcat is 6.4 sec(-1) for L-serine. kcat is 2.86 sec(-1) for L-alanine.</text>
    </kinetics>
    <phDependence>
        <text evidence="4 5">Optimum pH is 9.2.</text>
    </phDependence>
</comment>
<comment type="subunit">
    <text evidence="4 6 8">Forms homodimers (PubMed:18235971, PubMed:31681359). Interacts with RABGAP22 (PubMed:24505423).</text>
</comment>
<comment type="subcellular location">
    <subcellularLocation>
        <location evidence="3 6">Peroxisome</location>
    </subcellularLocation>
</comment>
<comment type="tissue specificity">
    <text evidence="3 5">Widely expressed. Preferentially expressed in green, leafy tissues, root cortex and epidermis, developing siliques and dry seeds.</text>
</comment>
<comment type="induction">
    <text evidence="5 6 7">Up-regulated in roots after treatment with asparagine (PubMed:23098902). Induced in roots by infection with the soil-born fungal pathogen Verticillium longisporum (PubMed:24505423). Induced in roots by abscicic acid (ABA) and salt stress (PubMed:31161264).</text>
</comment>
<comment type="disruption phenotype">
    <text evidence="6">No visible phenotype under normal growth conditions.</text>
</comment>
<comment type="miscellaneous">
    <text evidence="4 7">Preferentially acts as a serine--glyoxylate aminotransferase in vitro (PubMed:18235971). Seedlings overexpressing AGT1 exhibit increased length of primary roots, increased number of lateral roots and increased tolerance to salt stress (PubMed:31161264).</text>
</comment>
<comment type="similarity">
    <text evidence="10">Belongs to the class-V pyridoxal-phosphate-dependent aminotransferase family.</text>
</comment>
<protein>
    <recommendedName>
        <fullName evidence="11 12">Serine--glyoxylate aminotransferase</fullName>
        <ecNumber evidence="4 5">2.6.1.45</ecNumber>
    </recommendedName>
    <alternativeName>
        <fullName evidence="11 12">Alanine--glyoxylate aminotransferase</fullName>
        <shortName evidence="11 12">AGT</shortName>
        <ecNumber evidence="4 5">2.6.1.44</ecNumber>
    </alternativeName>
    <alternativeName>
        <fullName evidence="11 12">Asparagine aminotransferase</fullName>
        <ecNumber>2.6.1.-</ecNumber>
    </alternativeName>
    <alternativeName>
        <fullName evidence="11 12">Serine--pyruvate aminotransferase</fullName>
        <ecNumber evidence="5">2.6.1.51</ecNumber>
    </alternativeName>
</protein>
<organism>
    <name type="scientific">Arabidopsis thaliana</name>
    <name type="common">Mouse-ear cress</name>
    <dbReference type="NCBI Taxonomy" id="3702"/>
    <lineage>
        <taxon>Eukaryota</taxon>
        <taxon>Viridiplantae</taxon>
        <taxon>Streptophyta</taxon>
        <taxon>Embryophyta</taxon>
        <taxon>Tracheophyta</taxon>
        <taxon>Spermatophyta</taxon>
        <taxon>Magnoliopsida</taxon>
        <taxon>eudicotyledons</taxon>
        <taxon>Gunneridae</taxon>
        <taxon>Pentapetalae</taxon>
        <taxon>rosids</taxon>
        <taxon>malvids</taxon>
        <taxon>Brassicales</taxon>
        <taxon>Brassicaceae</taxon>
        <taxon>Camelineae</taxon>
        <taxon>Arabidopsis</taxon>
    </lineage>
</organism>
<reference key="1">
    <citation type="online journal article" date="1998" name="Plant Gene Register">
        <title>Sequence analysis of a cDNA encoding alanine:glyoxylate aminotransferase from Arabidopsis thaliana.</title>
        <authorList>
            <person name="Liepman A.H."/>
            <person name="Olsen L.J."/>
        </authorList>
        <locator>PGR98-113</locator>
    </citation>
    <scope>NUCLEOTIDE SEQUENCE [MRNA]</scope>
    <source>
        <strain>cv. Columbia</strain>
    </source>
</reference>
<reference key="2">
    <citation type="submission" date="2000-09" db="EMBL/GenBank/DDBJ databases">
        <title>Molecular characterization of serine:glyoxylate aminotransferase localized in plant leaf peroxisomes.</title>
        <authorList>
            <person name="Yamaguchi K."/>
            <person name="Takeuchi Y."/>
            <person name="Nishimura M."/>
        </authorList>
    </citation>
    <scope>NUCLEOTIDE SEQUENCE [MRNA]</scope>
    <source>
        <strain>cv. Columbia</strain>
    </source>
</reference>
<reference key="3">
    <citation type="journal article" date="1999" name="Nature">
        <title>Sequence and analysis of chromosome 2 of the plant Arabidopsis thaliana.</title>
        <authorList>
            <person name="Lin X."/>
            <person name="Kaul S."/>
            <person name="Rounsley S.D."/>
            <person name="Shea T.P."/>
            <person name="Benito M.-I."/>
            <person name="Town C.D."/>
            <person name="Fujii C.Y."/>
            <person name="Mason T.M."/>
            <person name="Bowman C.L."/>
            <person name="Barnstead M.E."/>
            <person name="Feldblyum T.V."/>
            <person name="Buell C.R."/>
            <person name="Ketchum K.A."/>
            <person name="Lee J.J."/>
            <person name="Ronning C.M."/>
            <person name="Koo H.L."/>
            <person name="Moffat K.S."/>
            <person name="Cronin L.A."/>
            <person name="Shen M."/>
            <person name="Pai G."/>
            <person name="Van Aken S."/>
            <person name="Umayam L."/>
            <person name="Tallon L.J."/>
            <person name="Gill J.E."/>
            <person name="Adams M.D."/>
            <person name="Carrera A.J."/>
            <person name="Creasy T.H."/>
            <person name="Goodman H.M."/>
            <person name="Somerville C.R."/>
            <person name="Copenhaver G.P."/>
            <person name="Preuss D."/>
            <person name="Nierman W.C."/>
            <person name="White O."/>
            <person name="Eisen J.A."/>
            <person name="Salzberg S.L."/>
            <person name="Fraser C.M."/>
            <person name="Venter J.C."/>
        </authorList>
    </citation>
    <scope>NUCLEOTIDE SEQUENCE [LARGE SCALE GENOMIC DNA]</scope>
    <source>
        <strain>cv. Columbia</strain>
    </source>
</reference>
<reference key="4">
    <citation type="journal article" date="2017" name="Plant J.">
        <title>Araport11: a complete reannotation of the Arabidopsis thaliana reference genome.</title>
        <authorList>
            <person name="Cheng C.Y."/>
            <person name="Krishnakumar V."/>
            <person name="Chan A.P."/>
            <person name="Thibaud-Nissen F."/>
            <person name="Schobel S."/>
            <person name="Town C.D."/>
        </authorList>
    </citation>
    <scope>GENOME REANNOTATION</scope>
    <source>
        <strain>cv. Columbia</strain>
    </source>
</reference>
<reference key="5">
    <citation type="journal article" date="2003" name="Science">
        <title>Empirical analysis of transcriptional activity in the Arabidopsis genome.</title>
        <authorList>
            <person name="Yamada K."/>
            <person name="Lim J."/>
            <person name="Dale J.M."/>
            <person name="Chen H."/>
            <person name="Shinn P."/>
            <person name="Palm C.J."/>
            <person name="Southwick A.M."/>
            <person name="Wu H.C."/>
            <person name="Kim C.J."/>
            <person name="Nguyen M."/>
            <person name="Pham P.K."/>
            <person name="Cheuk R.F."/>
            <person name="Karlin-Newmann G."/>
            <person name="Liu S.X."/>
            <person name="Lam B."/>
            <person name="Sakano H."/>
            <person name="Wu T."/>
            <person name="Yu G."/>
            <person name="Miranda M."/>
            <person name="Quach H.L."/>
            <person name="Tripp M."/>
            <person name="Chang C.H."/>
            <person name="Lee J.M."/>
            <person name="Toriumi M.J."/>
            <person name="Chan M.M."/>
            <person name="Tang C.C."/>
            <person name="Onodera C.S."/>
            <person name="Deng J.M."/>
            <person name="Akiyama K."/>
            <person name="Ansari Y."/>
            <person name="Arakawa T."/>
            <person name="Banh J."/>
            <person name="Banno F."/>
            <person name="Bowser L."/>
            <person name="Brooks S.Y."/>
            <person name="Carninci P."/>
            <person name="Chao Q."/>
            <person name="Choy N."/>
            <person name="Enju A."/>
            <person name="Goldsmith A.D."/>
            <person name="Gurjal M."/>
            <person name="Hansen N.F."/>
            <person name="Hayashizaki Y."/>
            <person name="Johnson-Hopson C."/>
            <person name="Hsuan V.W."/>
            <person name="Iida K."/>
            <person name="Karnes M."/>
            <person name="Khan S."/>
            <person name="Koesema E."/>
            <person name="Ishida J."/>
            <person name="Jiang P.X."/>
            <person name="Jones T."/>
            <person name="Kawai J."/>
            <person name="Kamiya A."/>
            <person name="Meyers C."/>
            <person name="Nakajima M."/>
            <person name="Narusaka M."/>
            <person name="Seki M."/>
            <person name="Sakurai T."/>
            <person name="Satou M."/>
            <person name="Tamse R."/>
            <person name="Vaysberg M."/>
            <person name="Wallender E.K."/>
            <person name="Wong C."/>
            <person name="Yamamura Y."/>
            <person name="Yuan S."/>
            <person name="Shinozaki K."/>
            <person name="Davis R.W."/>
            <person name="Theologis A."/>
            <person name="Ecker J.R."/>
        </authorList>
    </citation>
    <scope>NUCLEOTIDE SEQUENCE [LARGE SCALE MRNA]</scope>
    <source>
        <strain>cv. Columbia</strain>
    </source>
</reference>
<reference key="6">
    <citation type="submission" date="2005-03" db="EMBL/GenBank/DDBJ databases">
        <title>Large-scale analysis of RIKEN Arabidopsis full-length (RAFL) cDNAs.</title>
        <authorList>
            <person name="Totoki Y."/>
            <person name="Seki M."/>
            <person name="Ishida J."/>
            <person name="Nakajima M."/>
            <person name="Enju A."/>
            <person name="Kamiya A."/>
            <person name="Narusaka M."/>
            <person name="Shin-i T."/>
            <person name="Nakagawa M."/>
            <person name="Sakamoto N."/>
            <person name="Oishi K."/>
            <person name="Kohara Y."/>
            <person name="Kobayashi M."/>
            <person name="Toyoda A."/>
            <person name="Sakaki Y."/>
            <person name="Sakurai T."/>
            <person name="Iida K."/>
            <person name="Akiyama K."/>
            <person name="Satou M."/>
            <person name="Toyoda T."/>
            <person name="Konagaya A."/>
            <person name="Carninci P."/>
            <person name="Kawai J."/>
            <person name="Hayashizaki Y."/>
            <person name="Shinozaki K."/>
        </authorList>
    </citation>
    <scope>NUCLEOTIDE SEQUENCE [LARGE SCALE MRNA] OF 278-401</scope>
    <source>
        <strain>cv. Columbia</strain>
    </source>
</reference>
<reference key="7">
    <citation type="journal article" date="2001" name="Plant J.">
        <title>Peroxisomal alanine:glyoxylate aminotransferase (AGT1) is a photorespiratory enzyme with multiple substrates in Arabidopsis thaliana.</title>
        <authorList>
            <person name="Liepman A.H."/>
            <person name="Olsen L.J."/>
        </authorList>
    </citation>
    <scope>CHARACTERIZATION</scope>
    <scope>TISSUE SPECIFICITY</scope>
    <scope>SUBCELLULAR LOCATION</scope>
    <scope>MUTAGENESIS OF PRO-251</scope>
</reference>
<reference key="8">
    <citation type="journal article" date="2007" name="Plant Cell">
        <title>Proteome analysis of Arabidopsis leaf peroxisomes reveals novel targeting peptides, metabolic pathways, and defense mechanisms.</title>
        <authorList>
            <person name="Reumann S."/>
            <person name="Babujee L."/>
            <person name="Ma C."/>
            <person name="Wienkoop S."/>
            <person name="Siemsen T."/>
            <person name="Antonicelli G.E."/>
            <person name="Rasche N."/>
            <person name="Lueder F."/>
            <person name="Weckwerth W."/>
            <person name="Jahn O."/>
        </authorList>
    </citation>
    <scope>IDENTIFICATION BY MASS SPECTROMETRY</scope>
</reference>
<reference key="9">
    <citation type="journal article" date="2008" name="Acta Biochim. Biophys. Sin.">
        <title>Properties of serine:glyoxylate aminotransferase purified from Arabidopsis thaliana leaves.</title>
        <authorList>
            <person name="Kendziorek M."/>
            <person name="Paszkowski A."/>
        </authorList>
    </citation>
    <scope>FUNCTION</scope>
    <scope>CATALYTIC ACTIVITY</scope>
    <scope>BIOPHYSICOCHEMICAL PROPERTIES</scope>
    <scope>SUBUNIT</scope>
    <scope>ACTIVITY REGULATION</scope>
    <source>
        <strain>cv. Landsberg erecta</strain>
    </source>
</reference>
<reference key="10">
    <citation type="journal article" date="2012" name="J. Proteome Res.">
        <title>Identification of phosphoproteins in Arabidopsis thaliana leaves using polyethylene glycol fractionation, immobilized metal-ion affinity chromatography, two-dimensional gel electrophoresis and mass spectrometry.</title>
        <authorList>
            <person name="Aryal U.K."/>
            <person name="Krochko J.E."/>
            <person name="Ross A.R."/>
        </authorList>
    </citation>
    <scope>PHOSPHORYLATION [LARGE SCALE ANALYSIS] AT SER-204</scope>
    <scope>IDENTIFICATION BY MASS SPECTROMETRY [LARGE SCALE ANALYSIS]</scope>
</reference>
<reference key="11">
    <citation type="journal article" date="2012" name="Mol. Cell. Proteomics">
        <title>Comparative large-scale characterisation of plant vs. mammal proteins reveals similar and idiosyncratic N-alpha acetylation features.</title>
        <authorList>
            <person name="Bienvenut W.V."/>
            <person name="Sumpton D."/>
            <person name="Martinez A."/>
            <person name="Lilla S."/>
            <person name="Espagne C."/>
            <person name="Meinnel T."/>
            <person name="Giglione C."/>
        </authorList>
    </citation>
    <scope>ACETYLATION [LARGE SCALE ANALYSIS] AT MET-1</scope>
    <scope>IDENTIFICATION BY MASS SPECTROMETRY [LARGE SCALE ANALYSIS]</scope>
</reference>
<reference key="12">
    <citation type="journal article" date="2013" name="Phytochemistry">
        <title>Characterization of Arabidopsis serine:glyoxylate aminotransferase, AGT1, as an asparagine aminotransferase.</title>
        <authorList>
            <person name="Zhang Q."/>
            <person name="Lee J."/>
            <person name="Pandurangan S."/>
            <person name="Clarke M."/>
            <person name="Pajak A."/>
            <person name="Marsolais F."/>
        </authorList>
    </citation>
    <scope>FUNCTION</scope>
    <scope>TISSUE SPECIFICITY</scope>
    <scope>CATALYTIC ACTIVITY</scope>
    <scope>BIOPHYSICOCHEMICAL PROPERTIES</scope>
    <scope>INDUCTION BY ASPARAGINE</scope>
    <source>
        <strain>cv. Columbia</strain>
    </source>
</reference>
<reference key="13">
    <citation type="journal article" date="2014" name="PLoS ONE">
        <title>RabGAP22 is required for defense to the vascular pathogen Verticillium longisporum and contributes to stomata immunity.</title>
        <authorList>
            <person name="Roos J."/>
            <person name="Bejai S."/>
            <person name="Oide S."/>
            <person name="Dixelius C."/>
        </authorList>
    </citation>
    <scope>IDENTIFICATION BY MASS SPECTROMETRY</scope>
    <scope>INTERACTION WITH RABGAP22</scope>
    <scope>SUBCELLULAR LOCATION</scope>
    <scope>INDUCTION</scope>
    <scope>DISRUPTION PHENOTYPE</scope>
</reference>
<reference key="14">
    <citation type="journal article" date="2019" name="Plant Cell Rep.">
        <title>Overexpression of AtAGT1 promoted root growth and development during seedling establishment.</title>
        <authorList>
            <person name="Wang R."/>
            <person name="Yang L."/>
            <person name="Han X."/>
            <person name="Zhao Y."/>
            <person name="Zhao L."/>
            <person name="Xiang B."/>
            <person name="Zhu Y."/>
            <person name="Bai Y."/>
            <person name="Wang Y."/>
        </authorList>
    </citation>
    <scope>FUNCTION</scope>
    <scope>INDUCTION</scope>
</reference>
<reference key="15">
    <citation type="journal article" date="2019" name="Front. Plant Sci.">
        <title>Crystal structure of photorespiratory alanine:glyoxylate aminotransferase 1 (AGT1) from Arabidopsis thaliana.</title>
        <authorList>
            <person name="Liepman A.H."/>
            <person name="Vijayalakshmi J."/>
            <person name="Peisach D."/>
            <person name="Hulsebus B."/>
            <person name="Olsen L.J."/>
            <person name="Saper M.A."/>
        </authorList>
    </citation>
    <scope>X-RAY CRYSTALLOGRAPHY (2.10 ANGSTROMS)IN COMPLEX WITH 3-HYDROXYPYRUVATE AND PYRIDOXAL 5'-PHOSPHATE</scope>
    <scope>HOMODIMERIZATION</scope>
</reference>
<gene>
    <name evidence="9" type="primary">AGT1</name>
    <name evidence="13" type="ordered locus">At2g13360</name>
    <name evidence="14" type="ORF">F14O4.7</name>
</gene>
<name>SGAT_ARATH</name>